<reference key="1">
    <citation type="journal article" date="2009" name="Appl. Environ. Microbiol.">
        <title>Three genomes from the phylum Acidobacteria provide insight into the lifestyles of these microorganisms in soils.</title>
        <authorList>
            <person name="Ward N.L."/>
            <person name="Challacombe J.F."/>
            <person name="Janssen P.H."/>
            <person name="Henrissat B."/>
            <person name="Coutinho P.M."/>
            <person name="Wu M."/>
            <person name="Xie G."/>
            <person name="Haft D.H."/>
            <person name="Sait M."/>
            <person name="Badger J."/>
            <person name="Barabote R.D."/>
            <person name="Bradley B."/>
            <person name="Brettin T.S."/>
            <person name="Brinkac L.M."/>
            <person name="Bruce D."/>
            <person name="Creasy T."/>
            <person name="Daugherty S.C."/>
            <person name="Davidsen T.M."/>
            <person name="DeBoy R.T."/>
            <person name="Detter J.C."/>
            <person name="Dodson R.J."/>
            <person name="Durkin A.S."/>
            <person name="Ganapathy A."/>
            <person name="Gwinn-Giglio M."/>
            <person name="Han C.S."/>
            <person name="Khouri H."/>
            <person name="Kiss H."/>
            <person name="Kothari S.P."/>
            <person name="Madupu R."/>
            <person name="Nelson K.E."/>
            <person name="Nelson W.C."/>
            <person name="Paulsen I."/>
            <person name="Penn K."/>
            <person name="Ren Q."/>
            <person name="Rosovitz M.J."/>
            <person name="Selengut J.D."/>
            <person name="Shrivastava S."/>
            <person name="Sullivan S.A."/>
            <person name="Tapia R."/>
            <person name="Thompson L.S."/>
            <person name="Watkins K.L."/>
            <person name="Yang Q."/>
            <person name="Yu C."/>
            <person name="Zafar N."/>
            <person name="Zhou L."/>
            <person name="Kuske C.R."/>
        </authorList>
    </citation>
    <scope>NUCLEOTIDE SEQUENCE [LARGE SCALE GENOMIC DNA]</scope>
    <source>
        <strain>Ellin6076</strain>
    </source>
</reference>
<sequence length="378" mass="41865">MLYFLLYEQLHRYISPFRVFSYTTVRTAFASLTALFLCIALGPWLINKLREFQIGQYIREEGPKSHQKKAGTPTMGGVLIVISIVIPTLLWADLRYPYVWIALAGLLGYGWIGFLDDYAKVTKQRNLGLSGKRKLVYQFIMGFAFAASLLVMRAYGDFSTTMNIPFLKQFKPSLLMTSMMANPWTYVIGVAPFCIFVALVVVFYSNAVNLTDGLDGLAIGLMVIAAGALTVLAYAGGHAQLAQYLQLARNPRTSELTIFCGSMTGASLGFLWYNAHPAEIFMGDVGSLGLGGAMAVVAVLIKQEILLLFIGGIFVLEAFSVILQVGSYKLRHGKRIFKMAPLHHHFEALGWTESKIIARFWIAGLVLALFALTTLKLR</sequence>
<evidence type="ECO:0000255" key="1">
    <source>
        <dbReference type="HAMAP-Rule" id="MF_00038"/>
    </source>
</evidence>
<keyword id="KW-0131">Cell cycle</keyword>
<keyword id="KW-0132">Cell division</keyword>
<keyword id="KW-0997">Cell inner membrane</keyword>
<keyword id="KW-1003">Cell membrane</keyword>
<keyword id="KW-0133">Cell shape</keyword>
<keyword id="KW-0961">Cell wall biogenesis/degradation</keyword>
<keyword id="KW-0460">Magnesium</keyword>
<keyword id="KW-0472">Membrane</keyword>
<keyword id="KW-0479">Metal-binding</keyword>
<keyword id="KW-0573">Peptidoglycan synthesis</keyword>
<keyword id="KW-0808">Transferase</keyword>
<keyword id="KW-0812">Transmembrane</keyword>
<keyword id="KW-1133">Transmembrane helix</keyword>
<organism>
    <name type="scientific">Solibacter usitatus (strain Ellin6076)</name>
    <dbReference type="NCBI Taxonomy" id="234267"/>
    <lineage>
        <taxon>Bacteria</taxon>
        <taxon>Pseudomonadati</taxon>
        <taxon>Acidobacteriota</taxon>
        <taxon>Terriglobia</taxon>
        <taxon>Bryobacterales</taxon>
        <taxon>Solibacteraceae</taxon>
        <taxon>Candidatus Solibacter</taxon>
    </lineage>
</organism>
<name>MRAY_SOLUE</name>
<dbReference type="EC" id="2.7.8.13" evidence="1"/>
<dbReference type="EMBL" id="CP000473">
    <property type="protein sequence ID" value="ABJ88225.1"/>
    <property type="molecule type" value="Genomic_DNA"/>
</dbReference>
<dbReference type="SMR" id="Q01Q45"/>
<dbReference type="FunCoup" id="Q01Q45">
    <property type="interactions" value="483"/>
</dbReference>
<dbReference type="STRING" id="234267.Acid_7314"/>
<dbReference type="KEGG" id="sus:Acid_7314"/>
<dbReference type="eggNOG" id="COG0472">
    <property type="taxonomic scope" value="Bacteria"/>
</dbReference>
<dbReference type="HOGENOM" id="CLU_023982_0_0_0"/>
<dbReference type="InParanoid" id="Q01Q45"/>
<dbReference type="OrthoDB" id="9805475at2"/>
<dbReference type="UniPathway" id="UPA00219"/>
<dbReference type="GO" id="GO:0005886">
    <property type="term" value="C:plasma membrane"/>
    <property type="evidence" value="ECO:0007669"/>
    <property type="project" value="UniProtKB-SubCell"/>
</dbReference>
<dbReference type="GO" id="GO:0046872">
    <property type="term" value="F:metal ion binding"/>
    <property type="evidence" value="ECO:0007669"/>
    <property type="project" value="UniProtKB-KW"/>
</dbReference>
<dbReference type="GO" id="GO:0008963">
    <property type="term" value="F:phospho-N-acetylmuramoyl-pentapeptide-transferase activity"/>
    <property type="evidence" value="ECO:0007669"/>
    <property type="project" value="UniProtKB-UniRule"/>
</dbReference>
<dbReference type="GO" id="GO:0051992">
    <property type="term" value="F:UDP-N-acetylmuramoyl-L-alanyl-D-glutamyl-meso-2,6-diaminopimelyl-D-alanyl-D-alanine:undecaprenyl-phosphate transferase activity"/>
    <property type="evidence" value="ECO:0007669"/>
    <property type="project" value="RHEA"/>
</dbReference>
<dbReference type="GO" id="GO:0051301">
    <property type="term" value="P:cell division"/>
    <property type="evidence" value="ECO:0007669"/>
    <property type="project" value="UniProtKB-KW"/>
</dbReference>
<dbReference type="GO" id="GO:0071555">
    <property type="term" value="P:cell wall organization"/>
    <property type="evidence" value="ECO:0007669"/>
    <property type="project" value="UniProtKB-KW"/>
</dbReference>
<dbReference type="GO" id="GO:0009252">
    <property type="term" value="P:peptidoglycan biosynthetic process"/>
    <property type="evidence" value="ECO:0007669"/>
    <property type="project" value="UniProtKB-UniRule"/>
</dbReference>
<dbReference type="GO" id="GO:0008360">
    <property type="term" value="P:regulation of cell shape"/>
    <property type="evidence" value="ECO:0007669"/>
    <property type="project" value="UniProtKB-KW"/>
</dbReference>
<dbReference type="CDD" id="cd06852">
    <property type="entry name" value="GT_MraY"/>
    <property type="match status" value="1"/>
</dbReference>
<dbReference type="HAMAP" id="MF_00038">
    <property type="entry name" value="MraY"/>
    <property type="match status" value="1"/>
</dbReference>
<dbReference type="InterPro" id="IPR000715">
    <property type="entry name" value="Glycosyl_transferase_4"/>
</dbReference>
<dbReference type="InterPro" id="IPR003524">
    <property type="entry name" value="PNAcMuramoyl-5peptid_Trfase"/>
</dbReference>
<dbReference type="InterPro" id="IPR018480">
    <property type="entry name" value="PNAcMuramoyl-5peptid_Trfase_CS"/>
</dbReference>
<dbReference type="NCBIfam" id="TIGR00445">
    <property type="entry name" value="mraY"/>
    <property type="match status" value="1"/>
</dbReference>
<dbReference type="PANTHER" id="PTHR22926">
    <property type="entry name" value="PHOSPHO-N-ACETYLMURAMOYL-PENTAPEPTIDE-TRANSFERASE"/>
    <property type="match status" value="1"/>
</dbReference>
<dbReference type="PANTHER" id="PTHR22926:SF5">
    <property type="entry name" value="PHOSPHO-N-ACETYLMURAMOYL-PENTAPEPTIDE-TRANSFERASE HOMOLOG"/>
    <property type="match status" value="1"/>
</dbReference>
<dbReference type="Pfam" id="PF00953">
    <property type="entry name" value="Glycos_transf_4"/>
    <property type="match status" value="1"/>
</dbReference>
<dbReference type="Pfam" id="PF10555">
    <property type="entry name" value="MraY_sig1"/>
    <property type="match status" value="1"/>
</dbReference>
<dbReference type="PROSITE" id="PS01347">
    <property type="entry name" value="MRAY_1"/>
    <property type="match status" value="1"/>
</dbReference>
<dbReference type="PROSITE" id="PS01348">
    <property type="entry name" value="MRAY_2"/>
    <property type="match status" value="1"/>
</dbReference>
<accession>Q01Q45</accession>
<feature type="chain" id="PRO_1000003068" description="Phospho-N-acetylmuramoyl-pentapeptide-transferase">
    <location>
        <begin position="1"/>
        <end position="378"/>
    </location>
</feature>
<feature type="transmembrane region" description="Helical" evidence="1">
    <location>
        <begin position="27"/>
        <end position="47"/>
    </location>
</feature>
<feature type="transmembrane region" description="Helical" evidence="1">
    <location>
        <begin position="74"/>
        <end position="94"/>
    </location>
</feature>
<feature type="transmembrane region" description="Helical" evidence="1">
    <location>
        <begin position="96"/>
        <end position="116"/>
    </location>
</feature>
<feature type="transmembrane region" description="Helical" evidence="1">
    <location>
        <begin position="135"/>
        <end position="155"/>
    </location>
</feature>
<feature type="transmembrane region" description="Helical" evidence="1">
    <location>
        <begin position="184"/>
        <end position="204"/>
    </location>
</feature>
<feature type="transmembrane region" description="Helical" evidence="1">
    <location>
        <begin position="216"/>
        <end position="236"/>
    </location>
</feature>
<feature type="transmembrane region" description="Helical" evidence="1">
    <location>
        <begin position="256"/>
        <end position="276"/>
    </location>
</feature>
<feature type="transmembrane region" description="Helical" evidence="1">
    <location>
        <begin position="280"/>
        <end position="300"/>
    </location>
</feature>
<feature type="transmembrane region" description="Helical" evidence="1">
    <location>
        <begin position="305"/>
        <end position="325"/>
    </location>
</feature>
<feature type="transmembrane region" description="Helical" evidence="1">
    <location>
        <begin position="355"/>
        <end position="375"/>
    </location>
</feature>
<comment type="function">
    <text evidence="1">Catalyzes the initial step of the lipid cycle reactions in the biosynthesis of the cell wall peptidoglycan: transfers peptidoglycan precursor phospho-MurNAc-pentapeptide from UDP-MurNAc-pentapeptide onto the lipid carrier undecaprenyl phosphate, yielding undecaprenyl-pyrophosphoryl-MurNAc-pentapeptide, known as lipid I.</text>
</comment>
<comment type="catalytic activity">
    <reaction evidence="1">
        <text>UDP-N-acetyl-alpha-D-muramoyl-L-alanyl-gamma-D-glutamyl-meso-2,6-diaminopimeloyl-D-alanyl-D-alanine + di-trans,octa-cis-undecaprenyl phosphate = di-trans,octa-cis-undecaprenyl diphospho-N-acetyl-alpha-D-muramoyl-L-alanyl-D-glutamyl-meso-2,6-diaminopimeloyl-D-alanyl-D-alanine + UMP</text>
        <dbReference type="Rhea" id="RHEA:28386"/>
        <dbReference type="ChEBI" id="CHEBI:57865"/>
        <dbReference type="ChEBI" id="CHEBI:60392"/>
        <dbReference type="ChEBI" id="CHEBI:61386"/>
        <dbReference type="ChEBI" id="CHEBI:61387"/>
        <dbReference type="EC" id="2.7.8.13"/>
    </reaction>
</comment>
<comment type="cofactor">
    <cofactor evidence="1">
        <name>Mg(2+)</name>
        <dbReference type="ChEBI" id="CHEBI:18420"/>
    </cofactor>
</comment>
<comment type="pathway">
    <text evidence="1">Cell wall biogenesis; peptidoglycan biosynthesis.</text>
</comment>
<comment type="subcellular location">
    <subcellularLocation>
        <location evidence="1">Cell inner membrane</location>
        <topology evidence="1">Multi-pass membrane protein</topology>
    </subcellularLocation>
</comment>
<comment type="similarity">
    <text evidence="1">Belongs to the glycosyltransferase 4 family. MraY subfamily.</text>
</comment>
<proteinExistence type="inferred from homology"/>
<gene>
    <name evidence="1" type="primary">mraY</name>
    <name type="ordered locus">Acid_7314</name>
</gene>
<protein>
    <recommendedName>
        <fullName evidence="1">Phospho-N-acetylmuramoyl-pentapeptide-transferase</fullName>
        <ecNumber evidence="1">2.7.8.13</ecNumber>
    </recommendedName>
    <alternativeName>
        <fullName evidence="1">UDP-MurNAc-pentapeptide phosphotransferase</fullName>
    </alternativeName>
</protein>